<protein>
    <recommendedName>
        <fullName evidence="1">Proline--tRNA ligase</fullName>
        <ecNumber evidence="1">6.1.1.15</ecNumber>
    </recommendedName>
    <alternativeName>
        <fullName evidence="1">Prolyl-tRNA synthetase</fullName>
        <shortName evidence="1">ProRS</shortName>
    </alternativeName>
</protein>
<name>SYP_BRUO2</name>
<comment type="function">
    <text evidence="1">Catalyzes the attachment of proline to tRNA(Pro) in a two-step reaction: proline is first activated by ATP to form Pro-AMP and then transferred to the acceptor end of tRNA(Pro).</text>
</comment>
<comment type="catalytic activity">
    <reaction evidence="1">
        <text>tRNA(Pro) + L-proline + ATP = L-prolyl-tRNA(Pro) + AMP + diphosphate</text>
        <dbReference type="Rhea" id="RHEA:14305"/>
        <dbReference type="Rhea" id="RHEA-COMP:9700"/>
        <dbReference type="Rhea" id="RHEA-COMP:9702"/>
        <dbReference type="ChEBI" id="CHEBI:30616"/>
        <dbReference type="ChEBI" id="CHEBI:33019"/>
        <dbReference type="ChEBI" id="CHEBI:60039"/>
        <dbReference type="ChEBI" id="CHEBI:78442"/>
        <dbReference type="ChEBI" id="CHEBI:78532"/>
        <dbReference type="ChEBI" id="CHEBI:456215"/>
        <dbReference type="EC" id="6.1.1.15"/>
    </reaction>
</comment>
<comment type="subunit">
    <text evidence="1">Homodimer.</text>
</comment>
<comment type="subcellular location">
    <subcellularLocation>
        <location evidence="1">Cytoplasm</location>
    </subcellularLocation>
</comment>
<comment type="similarity">
    <text evidence="1">Belongs to the class-II aminoacyl-tRNA synthetase family. ProS type 2 subfamily.</text>
</comment>
<evidence type="ECO:0000255" key="1">
    <source>
        <dbReference type="HAMAP-Rule" id="MF_01570"/>
    </source>
</evidence>
<gene>
    <name evidence="1" type="primary">proS</name>
    <name type="ordered locus">BOV_0816</name>
</gene>
<dbReference type="EC" id="6.1.1.15" evidence="1"/>
<dbReference type="EMBL" id="CP000708">
    <property type="protein sequence ID" value="ABQ61439.1"/>
    <property type="molecule type" value="Genomic_DNA"/>
</dbReference>
<dbReference type="RefSeq" id="WP_006012218.1">
    <property type="nucleotide sequence ID" value="NC_009505.1"/>
</dbReference>
<dbReference type="SMR" id="A5VQ02"/>
<dbReference type="GeneID" id="45124254"/>
<dbReference type="KEGG" id="bov:BOV_0816"/>
<dbReference type="HOGENOM" id="CLU_016739_4_2_5"/>
<dbReference type="Proteomes" id="UP000006383">
    <property type="component" value="Chromosome I"/>
</dbReference>
<dbReference type="GO" id="GO:0005829">
    <property type="term" value="C:cytosol"/>
    <property type="evidence" value="ECO:0007669"/>
    <property type="project" value="TreeGrafter"/>
</dbReference>
<dbReference type="GO" id="GO:0005524">
    <property type="term" value="F:ATP binding"/>
    <property type="evidence" value="ECO:0007669"/>
    <property type="project" value="UniProtKB-UniRule"/>
</dbReference>
<dbReference type="GO" id="GO:0004827">
    <property type="term" value="F:proline-tRNA ligase activity"/>
    <property type="evidence" value="ECO:0007669"/>
    <property type="project" value="UniProtKB-UniRule"/>
</dbReference>
<dbReference type="GO" id="GO:0006433">
    <property type="term" value="P:prolyl-tRNA aminoacylation"/>
    <property type="evidence" value="ECO:0007669"/>
    <property type="project" value="UniProtKB-UniRule"/>
</dbReference>
<dbReference type="CDD" id="cd00861">
    <property type="entry name" value="ProRS_anticodon_short"/>
    <property type="match status" value="1"/>
</dbReference>
<dbReference type="CDD" id="cd00779">
    <property type="entry name" value="ProRS_core_prok"/>
    <property type="match status" value="1"/>
</dbReference>
<dbReference type="FunFam" id="3.30.930.10:FF:000042">
    <property type="entry name" value="probable proline--tRNA ligase, mitochondrial"/>
    <property type="match status" value="1"/>
</dbReference>
<dbReference type="FunFam" id="3.40.50.800:FF:000032">
    <property type="entry name" value="Proline--tRNA ligase"/>
    <property type="match status" value="1"/>
</dbReference>
<dbReference type="Gene3D" id="3.40.50.800">
    <property type="entry name" value="Anticodon-binding domain"/>
    <property type="match status" value="1"/>
</dbReference>
<dbReference type="Gene3D" id="3.30.930.10">
    <property type="entry name" value="Bira Bifunctional Protein, Domain 2"/>
    <property type="match status" value="1"/>
</dbReference>
<dbReference type="HAMAP" id="MF_01570">
    <property type="entry name" value="Pro_tRNA_synth_type2"/>
    <property type="match status" value="1"/>
</dbReference>
<dbReference type="InterPro" id="IPR002314">
    <property type="entry name" value="aa-tRNA-synt_IIb"/>
</dbReference>
<dbReference type="InterPro" id="IPR006195">
    <property type="entry name" value="aa-tRNA-synth_II"/>
</dbReference>
<dbReference type="InterPro" id="IPR045864">
    <property type="entry name" value="aa-tRNA-synth_II/BPL/LPL"/>
</dbReference>
<dbReference type="InterPro" id="IPR004154">
    <property type="entry name" value="Anticodon-bd"/>
</dbReference>
<dbReference type="InterPro" id="IPR036621">
    <property type="entry name" value="Anticodon-bd_dom_sf"/>
</dbReference>
<dbReference type="InterPro" id="IPR002316">
    <property type="entry name" value="Pro-tRNA-ligase_IIa"/>
</dbReference>
<dbReference type="InterPro" id="IPR004500">
    <property type="entry name" value="Pro-tRNA-synth_IIa_bac-type"/>
</dbReference>
<dbReference type="InterPro" id="IPR050062">
    <property type="entry name" value="Pro-tRNA_synthetase"/>
</dbReference>
<dbReference type="InterPro" id="IPR023716">
    <property type="entry name" value="Prolyl-tRNA_ligase_IIa_type2"/>
</dbReference>
<dbReference type="InterPro" id="IPR044140">
    <property type="entry name" value="ProRS_anticodon_short"/>
</dbReference>
<dbReference type="InterPro" id="IPR033730">
    <property type="entry name" value="ProRS_core_prok"/>
</dbReference>
<dbReference type="NCBIfam" id="NF008979">
    <property type="entry name" value="PRK12325.1"/>
    <property type="match status" value="1"/>
</dbReference>
<dbReference type="NCBIfam" id="TIGR00409">
    <property type="entry name" value="proS_fam_II"/>
    <property type="match status" value="1"/>
</dbReference>
<dbReference type="PANTHER" id="PTHR42753">
    <property type="entry name" value="MITOCHONDRIAL RIBOSOME PROTEIN L39/PROLYL-TRNA LIGASE FAMILY MEMBER"/>
    <property type="match status" value="1"/>
</dbReference>
<dbReference type="PANTHER" id="PTHR42753:SF2">
    <property type="entry name" value="PROLINE--TRNA LIGASE"/>
    <property type="match status" value="1"/>
</dbReference>
<dbReference type="Pfam" id="PF03129">
    <property type="entry name" value="HGTP_anticodon"/>
    <property type="match status" value="1"/>
</dbReference>
<dbReference type="Pfam" id="PF00587">
    <property type="entry name" value="tRNA-synt_2b"/>
    <property type="match status" value="1"/>
</dbReference>
<dbReference type="PRINTS" id="PR01046">
    <property type="entry name" value="TRNASYNTHPRO"/>
</dbReference>
<dbReference type="SUPFAM" id="SSF52954">
    <property type="entry name" value="Class II aaRS ABD-related"/>
    <property type="match status" value="1"/>
</dbReference>
<dbReference type="SUPFAM" id="SSF55681">
    <property type="entry name" value="Class II aaRS and biotin synthetases"/>
    <property type="match status" value="1"/>
</dbReference>
<dbReference type="PROSITE" id="PS50862">
    <property type="entry name" value="AA_TRNA_LIGASE_II"/>
    <property type="match status" value="1"/>
</dbReference>
<feature type="chain" id="PRO_1000069179" description="Proline--tRNA ligase">
    <location>
        <begin position="1"/>
        <end position="442"/>
    </location>
</feature>
<accession>A5VQ02</accession>
<reference key="1">
    <citation type="journal article" date="2009" name="PLoS ONE">
        <title>Genome degradation in Brucella ovis corresponds with narrowing of its host range and tissue tropism.</title>
        <authorList>
            <person name="Tsolis R.M."/>
            <person name="Seshadri R."/>
            <person name="Santos R.L."/>
            <person name="Sangari F.J."/>
            <person name="Lobo J.M."/>
            <person name="de Jong M.F."/>
            <person name="Ren Q."/>
            <person name="Myers G."/>
            <person name="Brinkac L.M."/>
            <person name="Nelson W.C."/>
            <person name="Deboy R.T."/>
            <person name="Angiuoli S."/>
            <person name="Khouri H."/>
            <person name="Dimitrov G."/>
            <person name="Robinson J.R."/>
            <person name="Mulligan S."/>
            <person name="Walker R.L."/>
            <person name="Elzer P.E."/>
            <person name="Hassan K.A."/>
            <person name="Paulsen I.T."/>
        </authorList>
    </citation>
    <scope>NUCLEOTIDE SEQUENCE [LARGE SCALE GENOMIC DNA]</scope>
    <source>
        <strain>ATCC 25840 / 63/290 / NCTC 10512</strain>
    </source>
</reference>
<keyword id="KW-0030">Aminoacyl-tRNA synthetase</keyword>
<keyword id="KW-0067">ATP-binding</keyword>
<keyword id="KW-0963">Cytoplasm</keyword>
<keyword id="KW-0436">Ligase</keyword>
<keyword id="KW-0547">Nucleotide-binding</keyword>
<keyword id="KW-0648">Protein biosynthesis</keyword>
<proteinExistence type="inferred from homology"/>
<organism>
    <name type="scientific">Brucella ovis (strain ATCC 25840 / 63/290 / NCTC 10512)</name>
    <dbReference type="NCBI Taxonomy" id="444178"/>
    <lineage>
        <taxon>Bacteria</taxon>
        <taxon>Pseudomonadati</taxon>
        <taxon>Pseudomonadota</taxon>
        <taxon>Alphaproteobacteria</taxon>
        <taxon>Hyphomicrobiales</taxon>
        <taxon>Brucellaceae</taxon>
        <taxon>Brucella/Ochrobactrum group</taxon>
        <taxon>Brucella</taxon>
    </lineage>
</organism>
<sequence length="442" mass="49597">MRLSRYFLPILKENPKEAEIVSHRLMLRSGMIRQQSAGIYSWLPIGLKVLNKVCTIIREEQNRAGANEILMPTIQSADLWRESGRYDAYGKEMLRIQDRQEREMLFGPTNEEMVTDIFRSYVRSYKDLPLNLYHIQWKFRDEVRPRFGVMRSREFLMKDAYSFDLDYEGAKMAYYRMFVSYLRTFARVGLQAIPMRADTGPIGGDLSHEFIILAETGESQVYCDRAYLDLAVPGADTDFRNDAQLTDIVTRWTTPYAATDEMHDEADWAKVKPESQVSARGIEVGHIFHFGTKYSEPMGAKVQGPDGKEHLVFMGSYGIGPSRLVAAAIEASHDDAGIIWPKAIAPFGAGIVNMKPGDEGCDGVSEKLYEALTNAGVDPLLDDKDERPGAKFATMDLIGLPTQVIVGPRGVAAGEVEVKDRKTGERQSLDIEAAINMLTAQA</sequence>